<comment type="function">
    <text evidence="1">Participates actively in the response to hyperosmotic and heat shock by preventing the aggregation of stress-denatured proteins and by disaggregating proteins, also in an autonomous, DnaK-independent fashion. Unfolded proteins bind initially to DnaJ; upon interaction with the DnaJ-bound protein, DnaK hydrolyzes its bound ATP, resulting in the formation of a stable complex. GrpE releases ADP from DnaK; ATP binding to DnaK triggers the release of the substrate protein, thus completing the reaction cycle. Several rounds of ATP-dependent interactions between DnaJ, DnaK and GrpE are required for fully efficient folding. Also involved, together with DnaK and GrpE, in the DNA replication of plasmids through activation of initiation proteins.</text>
</comment>
<comment type="cofactor">
    <cofactor evidence="1">
        <name>Zn(2+)</name>
        <dbReference type="ChEBI" id="CHEBI:29105"/>
    </cofactor>
    <text evidence="1">Binds 2 Zn(2+) ions per monomer.</text>
</comment>
<comment type="subunit">
    <text evidence="1">Homodimer.</text>
</comment>
<comment type="subcellular location">
    <subcellularLocation>
        <location evidence="1">Cytoplasm</location>
    </subcellularLocation>
</comment>
<comment type="domain">
    <text evidence="1">The J domain is necessary and sufficient to stimulate DnaK ATPase activity. Zinc center 1 plays an important role in the autonomous, DnaK-independent chaperone activity of DnaJ. Zinc center 2 is essential for interaction with DnaK and for DnaJ activity.</text>
</comment>
<comment type="similarity">
    <text evidence="1">Belongs to the DnaJ family.</text>
</comment>
<reference key="1">
    <citation type="journal article" date="1998" name="Nature">
        <title>The genome sequence of Rickettsia prowazekii and the origin of mitochondria.</title>
        <authorList>
            <person name="Andersson S.G.E."/>
            <person name="Zomorodipour A."/>
            <person name="Andersson J.O."/>
            <person name="Sicheritz-Ponten T."/>
            <person name="Alsmark U.C.M."/>
            <person name="Podowski R.M."/>
            <person name="Naeslund A.K."/>
            <person name="Eriksson A.-S."/>
            <person name="Winkler H.H."/>
            <person name="Kurland C.G."/>
        </authorList>
    </citation>
    <scope>NUCLEOTIDE SEQUENCE [LARGE SCALE GENOMIC DNA]</scope>
    <source>
        <strain>Madrid E</strain>
    </source>
</reference>
<keyword id="KW-0143">Chaperone</keyword>
<keyword id="KW-0963">Cytoplasm</keyword>
<keyword id="KW-0235">DNA replication</keyword>
<keyword id="KW-0479">Metal-binding</keyword>
<keyword id="KW-1185">Reference proteome</keyword>
<keyword id="KW-0677">Repeat</keyword>
<keyword id="KW-0346">Stress response</keyword>
<keyword id="KW-0862">Zinc</keyword>
<keyword id="KW-0863">Zinc-finger</keyword>
<feature type="chain" id="PRO_0000070873" description="Chaperone protein DnaJ">
    <location>
        <begin position="1"/>
        <end position="370"/>
    </location>
</feature>
<feature type="domain" description="J" evidence="1">
    <location>
        <begin position="4"/>
        <end position="68"/>
    </location>
</feature>
<feature type="repeat" description="CXXCXGXG motif">
    <location>
        <begin position="146"/>
        <end position="153"/>
    </location>
</feature>
<feature type="repeat" description="CXXCXGXG motif">
    <location>
        <begin position="163"/>
        <end position="170"/>
    </location>
</feature>
<feature type="repeat" description="CXXCXGXG motif">
    <location>
        <begin position="185"/>
        <end position="192"/>
    </location>
</feature>
<feature type="repeat" description="CXXCXGXG motif">
    <location>
        <begin position="199"/>
        <end position="206"/>
    </location>
</feature>
<feature type="zinc finger region" description="CR-type" evidence="1">
    <location>
        <begin position="133"/>
        <end position="211"/>
    </location>
</feature>
<feature type="binding site" evidence="1">
    <location>
        <position position="146"/>
    </location>
    <ligand>
        <name>Zn(2+)</name>
        <dbReference type="ChEBI" id="CHEBI:29105"/>
        <label>1</label>
    </ligand>
</feature>
<feature type="binding site" evidence="1">
    <location>
        <position position="149"/>
    </location>
    <ligand>
        <name>Zn(2+)</name>
        <dbReference type="ChEBI" id="CHEBI:29105"/>
        <label>1</label>
    </ligand>
</feature>
<feature type="binding site" evidence="1">
    <location>
        <position position="163"/>
    </location>
    <ligand>
        <name>Zn(2+)</name>
        <dbReference type="ChEBI" id="CHEBI:29105"/>
        <label>2</label>
    </ligand>
</feature>
<feature type="binding site" evidence="1">
    <location>
        <position position="166"/>
    </location>
    <ligand>
        <name>Zn(2+)</name>
        <dbReference type="ChEBI" id="CHEBI:29105"/>
        <label>2</label>
    </ligand>
</feature>
<feature type="binding site" evidence="1">
    <location>
        <position position="185"/>
    </location>
    <ligand>
        <name>Zn(2+)</name>
        <dbReference type="ChEBI" id="CHEBI:29105"/>
        <label>2</label>
    </ligand>
</feature>
<feature type="binding site" evidence="1">
    <location>
        <position position="188"/>
    </location>
    <ligand>
        <name>Zn(2+)</name>
        <dbReference type="ChEBI" id="CHEBI:29105"/>
        <label>2</label>
    </ligand>
</feature>
<feature type="binding site" evidence="1">
    <location>
        <position position="199"/>
    </location>
    <ligand>
        <name>Zn(2+)</name>
        <dbReference type="ChEBI" id="CHEBI:29105"/>
        <label>1</label>
    </ligand>
</feature>
<feature type="binding site" evidence="1">
    <location>
        <position position="202"/>
    </location>
    <ligand>
        <name>Zn(2+)</name>
        <dbReference type="ChEBI" id="CHEBI:29105"/>
        <label>1</label>
    </ligand>
</feature>
<gene>
    <name evidence="1" type="primary">dnaJ</name>
    <name type="ordered locus">RP184</name>
</gene>
<name>DNAJ_RICPR</name>
<accession>Q9ZDY0</accession>
<dbReference type="EMBL" id="AJ235270">
    <property type="protein sequence ID" value="CAA14650.1"/>
    <property type="molecule type" value="Genomic_DNA"/>
</dbReference>
<dbReference type="PIR" id="C71729">
    <property type="entry name" value="C71729"/>
</dbReference>
<dbReference type="RefSeq" id="NP_220573.1">
    <property type="nucleotide sequence ID" value="NC_000963.1"/>
</dbReference>
<dbReference type="RefSeq" id="WP_004595923.1">
    <property type="nucleotide sequence ID" value="NC_000963.1"/>
</dbReference>
<dbReference type="SMR" id="Q9ZDY0"/>
<dbReference type="STRING" id="272947.gene:17555266"/>
<dbReference type="EnsemblBacteria" id="CAA14650">
    <property type="protein sequence ID" value="CAA14650"/>
    <property type="gene ID" value="CAA14650"/>
</dbReference>
<dbReference type="GeneID" id="57569312"/>
<dbReference type="KEGG" id="rpr:RP184"/>
<dbReference type="PATRIC" id="fig|272947.5.peg.191"/>
<dbReference type="eggNOG" id="COG0484">
    <property type="taxonomic scope" value="Bacteria"/>
</dbReference>
<dbReference type="HOGENOM" id="CLU_017633_0_7_5"/>
<dbReference type="OrthoDB" id="9779889at2"/>
<dbReference type="Proteomes" id="UP000002480">
    <property type="component" value="Chromosome"/>
</dbReference>
<dbReference type="GO" id="GO:0005737">
    <property type="term" value="C:cytoplasm"/>
    <property type="evidence" value="ECO:0007669"/>
    <property type="project" value="UniProtKB-SubCell"/>
</dbReference>
<dbReference type="GO" id="GO:0005524">
    <property type="term" value="F:ATP binding"/>
    <property type="evidence" value="ECO:0007669"/>
    <property type="project" value="InterPro"/>
</dbReference>
<dbReference type="GO" id="GO:0031072">
    <property type="term" value="F:heat shock protein binding"/>
    <property type="evidence" value="ECO:0007669"/>
    <property type="project" value="InterPro"/>
</dbReference>
<dbReference type="GO" id="GO:0051082">
    <property type="term" value="F:unfolded protein binding"/>
    <property type="evidence" value="ECO:0007669"/>
    <property type="project" value="UniProtKB-UniRule"/>
</dbReference>
<dbReference type="GO" id="GO:0008270">
    <property type="term" value="F:zinc ion binding"/>
    <property type="evidence" value="ECO:0007669"/>
    <property type="project" value="UniProtKB-UniRule"/>
</dbReference>
<dbReference type="GO" id="GO:0051085">
    <property type="term" value="P:chaperone cofactor-dependent protein refolding"/>
    <property type="evidence" value="ECO:0007669"/>
    <property type="project" value="TreeGrafter"/>
</dbReference>
<dbReference type="GO" id="GO:0006260">
    <property type="term" value="P:DNA replication"/>
    <property type="evidence" value="ECO:0007669"/>
    <property type="project" value="UniProtKB-KW"/>
</dbReference>
<dbReference type="GO" id="GO:0042026">
    <property type="term" value="P:protein refolding"/>
    <property type="evidence" value="ECO:0007669"/>
    <property type="project" value="TreeGrafter"/>
</dbReference>
<dbReference type="GO" id="GO:0009408">
    <property type="term" value="P:response to heat"/>
    <property type="evidence" value="ECO:0007669"/>
    <property type="project" value="InterPro"/>
</dbReference>
<dbReference type="CDD" id="cd06257">
    <property type="entry name" value="DnaJ"/>
    <property type="match status" value="1"/>
</dbReference>
<dbReference type="CDD" id="cd10747">
    <property type="entry name" value="DnaJ_C"/>
    <property type="match status" value="1"/>
</dbReference>
<dbReference type="CDD" id="cd10719">
    <property type="entry name" value="DnaJ_zf"/>
    <property type="match status" value="1"/>
</dbReference>
<dbReference type="FunFam" id="1.10.287.110:FF:000153">
    <property type="entry name" value="Chaperone protein DnaJ"/>
    <property type="match status" value="1"/>
</dbReference>
<dbReference type="FunFam" id="2.10.230.10:FF:000002">
    <property type="entry name" value="Molecular chaperone DnaJ"/>
    <property type="match status" value="1"/>
</dbReference>
<dbReference type="FunFam" id="2.60.260.20:FF:000004">
    <property type="entry name" value="Molecular chaperone DnaJ"/>
    <property type="match status" value="1"/>
</dbReference>
<dbReference type="Gene3D" id="1.10.287.110">
    <property type="entry name" value="DnaJ domain"/>
    <property type="match status" value="1"/>
</dbReference>
<dbReference type="Gene3D" id="2.10.230.10">
    <property type="entry name" value="Heat shock protein DnaJ, cysteine-rich domain"/>
    <property type="match status" value="1"/>
</dbReference>
<dbReference type="Gene3D" id="2.60.260.20">
    <property type="entry name" value="Urease metallochaperone UreE, N-terminal domain"/>
    <property type="match status" value="2"/>
</dbReference>
<dbReference type="HAMAP" id="MF_01152">
    <property type="entry name" value="DnaJ"/>
    <property type="match status" value="1"/>
</dbReference>
<dbReference type="InterPro" id="IPR012724">
    <property type="entry name" value="DnaJ"/>
</dbReference>
<dbReference type="InterPro" id="IPR002939">
    <property type="entry name" value="DnaJ_C"/>
</dbReference>
<dbReference type="InterPro" id="IPR001623">
    <property type="entry name" value="DnaJ_domain"/>
</dbReference>
<dbReference type="InterPro" id="IPR018253">
    <property type="entry name" value="DnaJ_domain_CS"/>
</dbReference>
<dbReference type="InterPro" id="IPR008971">
    <property type="entry name" value="HSP40/DnaJ_pept-bd"/>
</dbReference>
<dbReference type="InterPro" id="IPR001305">
    <property type="entry name" value="HSP_DnaJ_Cys-rich_dom"/>
</dbReference>
<dbReference type="InterPro" id="IPR036410">
    <property type="entry name" value="HSP_DnaJ_Cys-rich_dom_sf"/>
</dbReference>
<dbReference type="InterPro" id="IPR036869">
    <property type="entry name" value="J_dom_sf"/>
</dbReference>
<dbReference type="NCBIfam" id="TIGR02349">
    <property type="entry name" value="DnaJ_bact"/>
    <property type="match status" value="1"/>
</dbReference>
<dbReference type="NCBIfam" id="NF008035">
    <property type="entry name" value="PRK10767.1"/>
    <property type="match status" value="1"/>
</dbReference>
<dbReference type="NCBIfam" id="NF010893">
    <property type="entry name" value="PRK14300.1"/>
    <property type="match status" value="1"/>
</dbReference>
<dbReference type="PANTHER" id="PTHR43096">
    <property type="entry name" value="DNAJ HOMOLOG 1, MITOCHONDRIAL-RELATED"/>
    <property type="match status" value="1"/>
</dbReference>
<dbReference type="PANTHER" id="PTHR43096:SF52">
    <property type="entry name" value="DNAJ HOMOLOG 1, MITOCHONDRIAL-RELATED"/>
    <property type="match status" value="1"/>
</dbReference>
<dbReference type="Pfam" id="PF00226">
    <property type="entry name" value="DnaJ"/>
    <property type="match status" value="1"/>
</dbReference>
<dbReference type="Pfam" id="PF01556">
    <property type="entry name" value="DnaJ_C"/>
    <property type="match status" value="1"/>
</dbReference>
<dbReference type="Pfam" id="PF00684">
    <property type="entry name" value="DnaJ_CXXCXGXG"/>
    <property type="match status" value="1"/>
</dbReference>
<dbReference type="PRINTS" id="PR00625">
    <property type="entry name" value="JDOMAIN"/>
</dbReference>
<dbReference type="SMART" id="SM00271">
    <property type="entry name" value="DnaJ"/>
    <property type="match status" value="1"/>
</dbReference>
<dbReference type="SUPFAM" id="SSF46565">
    <property type="entry name" value="Chaperone J-domain"/>
    <property type="match status" value="1"/>
</dbReference>
<dbReference type="SUPFAM" id="SSF57938">
    <property type="entry name" value="DnaJ/Hsp40 cysteine-rich domain"/>
    <property type="match status" value="1"/>
</dbReference>
<dbReference type="SUPFAM" id="SSF49493">
    <property type="entry name" value="HSP40/DnaJ peptide-binding domain"/>
    <property type="match status" value="2"/>
</dbReference>
<dbReference type="PROSITE" id="PS00636">
    <property type="entry name" value="DNAJ_1"/>
    <property type="match status" value="1"/>
</dbReference>
<dbReference type="PROSITE" id="PS50076">
    <property type="entry name" value="DNAJ_2"/>
    <property type="match status" value="1"/>
</dbReference>
<dbReference type="PROSITE" id="PS51188">
    <property type="entry name" value="ZF_CR"/>
    <property type="match status" value="1"/>
</dbReference>
<protein>
    <recommendedName>
        <fullName evidence="1">Chaperone protein DnaJ</fullName>
    </recommendedName>
</protein>
<proteinExistence type="inferred from homology"/>
<evidence type="ECO:0000255" key="1">
    <source>
        <dbReference type="HAMAP-Rule" id="MF_01152"/>
    </source>
</evidence>
<sequence>MSQDYYQVLGVSKTASQADIKKAYLKLAKQYHPDTTNANDAEKKFKEINAAYDVLKDEQKRAAYDRFGHDAFQSQQARGGGNNGSFHPDINDIFGDFFSDFMGSGRRKQTSSKIRGSDLKYDLTIKLEEAFHGIEKNISFSSEVKCDTCHGTGSEKGETITTCDACGGVGATRIQQGFFTLEQTCHKCQGNGQIIKNPCKKCHGMGRYHKQRNLSINIPAGVENGTRIRHTGEGEAGIRGGNNGDLYVDIAIKPHDIYKVDGANLHCKLPISFVHAALGGEIEVPVIEGGKVKLTIPAGTQNGDQLRLRSKGMSKVRSTIRGDMLTHIHVEVPKNLSKKQRELLEEFKKESINEKENDSSFFNKMKSMWS</sequence>
<organism>
    <name type="scientific">Rickettsia prowazekii (strain Madrid E)</name>
    <dbReference type="NCBI Taxonomy" id="272947"/>
    <lineage>
        <taxon>Bacteria</taxon>
        <taxon>Pseudomonadati</taxon>
        <taxon>Pseudomonadota</taxon>
        <taxon>Alphaproteobacteria</taxon>
        <taxon>Rickettsiales</taxon>
        <taxon>Rickettsiaceae</taxon>
        <taxon>Rickettsieae</taxon>
        <taxon>Rickettsia</taxon>
        <taxon>typhus group</taxon>
    </lineage>
</organism>